<reference key="1">
    <citation type="journal article" date="2004" name="Science">
        <title>Illuminating the evolutionary history of chlamydiae.</title>
        <authorList>
            <person name="Horn M."/>
            <person name="Collingro A."/>
            <person name="Schmitz-Esser S."/>
            <person name="Beier C.L."/>
            <person name="Purkhold U."/>
            <person name="Fartmann B."/>
            <person name="Brandt P."/>
            <person name="Nyakatura G.J."/>
            <person name="Droege M."/>
            <person name="Frishman D."/>
            <person name="Rattei T."/>
            <person name="Mewes H.-W."/>
            <person name="Wagner M."/>
        </authorList>
    </citation>
    <scope>NUCLEOTIDE SEQUENCE [LARGE SCALE GENOMIC DNA]</scope>
    <source>
        <strain>UWE25</strain>
    </source>
</reference>
<organism>
    <name type="scientific">Protochlamydia amoebophila (strain UWE25)</name>
    <dbReference type="NCBI Taxonomy" id="264201"/>
    <lineage>
        <taxon>Bacteria</taxon>
        <taxon>Pseudomonadati</taxon>
        <taxon>Chlamydiota</taxon>
        <taxon>Chlamydiia</taxon>
        <taxon>Parachlamydiales</taxon>
        <taxon>Parachlamydiaceae</taxon>
        <taxon>Candidatus Protochlamydia</taxon>
    </lineage>
</organism>
<sequence>MRYPEHLLKLIHILKKFPGVGHKSAERFAFHLLNWPMEHLIELSETVKNTKDKIKQCLNCGCLTDEAACYFCDINQRDSQIICVTAFPRDVFSIEETHEYRGLYHVLGGVLSPLENRGPEHLSISRLKHRIQDLQIKEVVIALDSTLEGDATALFLKQELAADDIQISRLAFGLPMGSSLDYVDGGTLARALAGRSRF</sequence>
<feature type="chain" id="PRO_0000190358" description="Recombination protein RecR">
    <location>
        <begin position="1"/>
        <end position="198"/>
    </location>
</feature>
<feature type="domain" description="Toprim" evidence="1">
    <location>
        <begin position="80"/>
        <end position="175"/>
    </location>
</feature>
<feature type="zinc finger region" description="C4-type" evidence="1">
    <location>
        <begin position="57"/>
        <end position="72"/>
    </location>
</feature>
<comment type="function">
    <text evidence="1">May play a role in DNA repair. It seems to be involved in an RecBC-independent recombinational process of DNA repair. It may act with RecF and RecO.</text>
</comment>
<comment type="similarity">
    <text evidence="1">Belongs to the RecR family.</text>
</comment>
<dbReference type="EMBL" id="BX908798">
    <property type="protein sequence ID" value="CAF24448.1"/>
    <property type="molecule type" value="Genomic_DNA"/>
</dbReference>
<dbReference type="RefSeq" id="WP_011176269.1">
    <property type="nucleotide sequence ID" value="NC_005861.2"/>
</dbReference>
<dbReference type="SMR" id="Q6MAF1"/>
<dbReference type="STRING" id="264201.pc1724"/>
<dbReference type="KEGG" id="pcu:PC_RS08255"/>
<dbReference type="eggNOG" id="COG0353">
    <property type="taxonomic scope" value="Bacteria"/>
</dbReference>
<dbReference type="HOGENOM" id="CLU_060739_1_1_0"/>
<dbReference type="OrthoDB" id="9802672at2"/>
<dbReference type="Proteomes" id="UP000000529">
    <property type="component" value="Chromosome"/>
</dbReference>
<dbReference type="GO" id="GO:0003677">
    <property type="term" value="F:DNA binding"/>
    <property type="evidence" value="ECO:0007669"/>
    <property type="project" value="UniProtKB-UniRule"/>
</dbReference>
<dbReference type="GO" id="GO:0008270">
    <property type="term" value="F:zinc ion binding"/>
    <property type="evidence" value="ECO:0007669"/>
    <property type="project" value="UniProtKB-KW"/>
</dbReference>
<dbReference type="GO" id="GO:0006310">
    <property type="term" value="P:DNA recombination"/>
    <property type="evidence" value="ECO:0007669"/>
    <property type="project" value="UniProtKB-UniRule"/>
</dbReference>
<dbReference type="GO" id="GO:0006281">
    <property type="term" value="P:DNA repair"/>
    <property type="evidence" value="ECO:0007669"/>
    <property type="project" value="UniProtKB-UniRule"/>
</dbReference>
<dbReference type="CDD" id="cd01025">
    <property type="entry name" value="TOPRIM_recR"/>
    <property type="match status" value="1"/>
</dbReference>
<dbReference type="Gene3D" id="3.40.1360.10">
    <property type="match status" value="1"/>
</dbReference>
<dbReference type="Gene3D" id="6.10.250.240">
    <property type="match status" value="1"/>
</dbReference>
<dbReference type="Gene3D" id="1.10.8.420">
    <property type="entry name" value="RecR Domain 1"/>
    <property type="match status" value="1"/>
</dbReference>
<dbReference type="HAMAP" id="MF_00017">
    <property type="entry name" value="RecR"/>
    <property type="match status" value="1"/>
</dbReference>
<dbReference type="InterPro" id="IPR000093">
    <property type="entry name" value="DNA_Rcmb_RecR"/>
</dbReference>
<dbReference type="InterPro" id="IPR023627">
    <property type="entry name" value="Rcmb_RecR"/>
</dbReference>
<dbReference type="InterPro" id="IPR015967">
    <property type="entry name" value="Rcmb_RecR_Znf"/>
</dbReference>
<dbReference type="InterPro" id="IPR006171">
    <property type="entry name" value="TOPRIM_dom"/>
</dbReference>
<dbReference type="InterPro" id="IPR034137">
    <property type="entry name" value="TOPRIM_RecR"/>
</dbReference>
<dbReference type="NCBIfam" id="TIGR00615">
    <property type="entry name" value="recR"/>
    <property type="match status" value="1"/>
</dbReference>
<dbReference type="PANTHER" id="PTHR30446">
    <property type="entry name" value="RECOMBINATION PROTEIN RECR"/>
    <property type="match status" value="1"/>
</dbReference>
<dbReference type="PANTHER" id="PTHR30446:SF0">
    <property type="entry name" value="RECOMBINATION PROTEIN RECR"/>
    <property type="match status" value="1"/>
</dbReference>
<dbReference type="Pfam" id="PF21175">
    <property type="entry name" value="RecR_C"/>
    <property type="match status" value="1"/>
</dbReference>
<dbReference type="Pfam" id="PF21176">
    <property type="entry name" value="RecR_HhH"/>
    <property type="match status" value="1"/>
</dbReference>
<dbReference type="Pfam" id="PF13662">
    <property type="entry name" value="Toprim_4"/>
    <property type="match status" value="1"/>
</dbReference>
<dbReference type="SMART" id="SM00493">
    <property type="entry name" value="TOPRIM"/>
    <property type="match status" value="1"/>
</dbReference>
<dbReference type="SUPFAM" id="SSF111304">
    <property type="entry name" value="Recombination protein RecR"/>
    <property type="match status" value="1"/>
</dbReference>
<dbReference type="PROSITE" id="PS01300">
    <property type="entry name" value="RECR"/>
    <property type="match status" value="1"/>
</dbReference>
<dbReference type="PROSITE" id="PS50880">
    <property type="entry name" value="TOPRIM"/>
    <property type="match status" value="1"/>
</dbReference>
<gene>
    <name evidence="1" type="primary">recR</name>
    <name type="ordered locus">pc1724</name>
</gene>
<proteinExistence type="inferred from homology"/>
<accession>Q6MAF1</accession>
<name>RECR_PARUW</name>
<evidence type="ECO:0000255" key="1">
    <source>
        <dbReference type="HAMAP-Rule" id="MF_00017"/>
    </source>
</evidence>
<keyword id="KW-0227">DNA damage</keyword>
<keyword id="KW-0233">DNA recombination</keyword>
<keyword id="KW-0234">DNA repair</keyword>
<keyword id="KW-0479">Metal-binding</keyword>
<keyword id="KW-1185">Reference proteome</keyword>
<keyword id="KW-0862">Zinc</keyword>
<keyword id="KW-0863">Zinc-finger</keyword>
<protein>
    <recommendedName>
        <fullName evidence="1">Recombination protein RecR</fullName>
    </recommendedName>
</protein>